<protein>
    <recommendedName>
        <fullName>CASP-like protein 2D1</fullName>
        <shortName>AlCASPL2D1</shortName>
    </recommendedName>
</protein>
<organism>
    <name type="scientific">Arabidopsis lyrata subsp. lyrata</name>
    <name type="common">Lyre-leaved rock-cress</name>
    <dbReference type="NCBI Taxonomy" id="81972"/>
    <lineage>
        <taxon>Eukaryota</taxon>
        <taxon>Viridiplantae</taxon>
        <taxon>Streptophyta</taxon>
        <taxon>Embryophyta</taxon>
        <taxon>Tracheophyta</taxon>
        <taxon>Spermatophyta</taxon>
        <taxon>Magnoliopsida</taxon>
        <taxon>eudicotyledons</taxon>
        <taxon>Gunneridae</taxon>
        <taxon>Pentapetalae</taxon>
        <taxon>rosids</taxon>
        <taxon>malvids</taxon>
        <taxon>Brassicales</taxon>
        <taxon>Brassicaceae</taxon>
        <taxon>Camelineae</taxon>
        <taxon>Arabidopsis</taxon>
    </lineage>
</organism>
<gene>
    <name type="ORF">ARALYDRAFT_495581</name>
</gene>
<feature type="chain" id="PRO_0000412001" description="CASP-like protein 2D1">
    <location>
        <begin position="1"/>
        <end position="193"/>
    </location>
</feature>
<feature type="topological domain" description="Cytoplasmic" evidence="2">
    <location>
        <begin position="1"/>
        <end position="29"/>
    </location>
</feature>
<feature type="transmembrane region" description="Helical" evidence="2">
    <location>
        <begin position="30"/>
        <end position="50"/>
    </location>
</feature>
<feature type="topological domain" description="Extracellular" evidence="2">
    <location>
        <begin position="51"/>
        <end position="73"/>
    </location>
</feature>
<feature type="transmembrane region" description="Helical" evidence="2">
    <location>
        <begin position="74"/>
        <end position="94"/>
    </location>
</feature>
<feature type="topological domain" description="Cytoplasmic" evidence="2">
    <location>
        <begin position="95"/>
        <end position="109"/>
    </location>
</feature>
<feature type="transmembrane region" description="Helical" evidence="2">
    <location>
        <begin position="110"/>
        <end position="132"/>
    </location>
</feature>
<feature type="topological domain" description="Extracellular" evidence="2">
    <location>
        <begin position="133"/>
        <end position="151"/>
    </location>
</feature>
<feature type="transmembrane region" description="Helical" evidence="2">
    <location>
        <begin position="152"/>
        <end position="172"/>
    </location>
</feature>
<feature type="topological domain" description="Cytoplasmic" evidence="2">
    <location>
        <begin position="173"/>
        <end position="193"/>
    </location>
</feature>
<feature type="region of interest" description="Disordered" evidence="3">
    <location>
        <begin position="1"/>
        <end position="24"/>
    </location>
</feature>
<accession>D7MUY4</accession>
<dbReference type="EMBL" id="GL348720">
    <property type="protein sequence ID" value="EFH40626.1"/>
    <property type="molecule type" value="Genomic_DNA"/>
</dbReference>
<dbReference type="STRING" id="81972.D7MUY4"/>
<dbReference type="EnsemblPlants" id="fgenesh2_kg.8__1397__AT5G54980.1">
    <property type="protein sequence ID" value="fgenesh2_kg.8__1397__AT5G54980.1"/>
    <property type="gene ID" value="fgenesh2_kg.8__1397__AT5G54980.1"/>
</dbReference>
<dbReference type="Gramene" id="fgenesh2_kg.8__1397__AT5G54980.1">
    <property type="protein sequence ID" value="fgenesh2_kg.8__1397__AT5G54980.1"/>
    <property type="gene ID" value="fgenesh2_kg.8__1397__AT5G54980.1"/>
</dbReference>
<dbReference type="KEGG" id="aly:9300443"/>
<dbReference type="eggNOG" id="ENOG502RY7Y">
    <property type="taxonomic scope" value="Eukaryota"/>
</dbReference>
<dbReference type="HOGENOM" id="CLU_066104_2_2_1"/>
<dbReference type="OrthoDB" id="755577at2759"/>
<dbReference type="Proteomes" id="UP000008694">
    <property type="component" value="Unassembled WGS sequence"/>
</dbReference>
<dbReference type="GO" id="GO:0005886">
    <property type="term" value="C:plasma membrane"/>
    <property type="evidence" value="ECO:0007669"/>
    <property type="project" value="UniProtKB-SubCell"/>
</dbReference>
<dbReference type="InterPro" id="IPR006459">
    <property type="entry name" value="CASP/CASPL"/>
</dbReference>
<dbReference type="InterPro" id="IPR006702">
    <property type="entry name" value="CASP_dom"/>
</dbReference>
<dbReference type="NCBIfam" id="TIGR01569">
    <property type="entry name" value="A_tha_TIGR01569"/>
    <property type="match status" value="1"/>
</dbReference>
<dbReference type="PANTHER" id="PTHR33573:SF30">
    <property type="entry name" value="CASP-LIKE PROTEIN 2C1-RELATED"/>
    <property type="match status" value="1"/>
</dbReference>
<dbReference type="PANTHER" id="PTHR33573">
    <property type="entry name" value="CASP-LIKE PROTEIN 4A4"/>
    <property type="match status" value="1"/>
</dbReference>
<dbReference type="Pfam" id="PF04535">
    <property type="entry name" value="CASP_dom"/>
    <property type="match status" value="1"/>
</dbReference>
<sequence length="193" mass="21528">MRANNNNTREEERSSSSKQQQPQAHMSLKIIDSCLRLSVVPLSVATIWLTVTNHESNPDYGNLDYNSIMGLKYMVGVSAISAIYALLSTISLWVTCLVSKAWLFFVPDQVLAYVMTTSVAGATEIVYLLNKGDKIVTWSEMCSSYPHYCSKLTIALGLHVFVLFFFLFLSVISAYRAFSPFDPPCDSQTNIDA</sequence>
<name>CSPL2_ARALL</name>
<keyword id="KW-1003">Cell membrane</keyword>
<keyword id="KW-0472">Membrane</keyword>
<keyword id="KW-1185">Reference proteome</keyword>
<keyword id="KW-0812">Transmembrane</keyword>
<keyword id="KW-1133">Transmembrane helix</keyword>
<reference key="1">
    <citation type="journal article" date="2011" name="Nat. Genet.">
        <title>The Arabidopsis lyrata genome sequence and the basis of rapid genome size change.</title>
        <authorList>
            <person name="Hu T.T."/>
            <person name="Pattyn P."/>
            <person name="Bakker E.G."/>
            <person name="Cao J."/>
            <person name="Cheng J.-F."/>
            <person name="Clark R.M."/>
            <person name="Fahlgren N."/>
            <person name="Fawcett J.A."/>
            <person name="Grimwood J."/>
            <person name="Gundlach H."/>
            <person name="Haberer G."/>
            <person name="Hollister J.D."/>
            <person name="Ossowski S."/>
            <person name="Ottilar R.P."/>
            <person name="Salamov A.A."/>
            <person name="Schneeberger K."/>
            <person name="Spannagl M."/>
            <person name="Wang X."/>
            <person name="Yang L."/>
            <person name="Nasrallah M.E."/>
            <person name="Bergelson J."/>
            <person name="Carrington J.C."/>
            <person name="Gaut B.S."/>
            <person name="Schmutz J."/>
            <person name="Mayer K.F.X."/>
            <person name="Van de Peer Y."/>
            <person name="Grigoriev I.V."/>
            <person name="Nordborg M."/>
            <person name="Weigel D."/>
            <person name="Guo Y.-L."/>
        </authorList>
    </citation>
    <scope>NUCLEOTIDE SEQUENCE [LARGE SCALE GENOMIC DNA]</scope>
    <source>
        <strain>cv. MN47</strain>
    </source>
</reference>
<reference key="2">
    <citation type="journal article" date="2014" name="Plant Physiol.">
        <title>Functional and evolutionary analysis of the CASPARIAN STRIP MEMBRANE DOMAIN PROTEIN family.</title>
        <authorList>
            <person name="Roppolo D."/>
            <person name="Boeckmann B."/>
            <person name="Pfister A."/>
            <person name="Boutet E."/>
            <person name="Rubio M.C."/>
            <person name="Denervaud-Tendon V."/>
            <person name="Vermeer J.E."/>
            <person name="Gheyselinck J."/>
            <person name="Xenarios I."/>
            <person name="Geldner N."/>
        </authorList>
    </citation>
    <scope>GENE FAMILY</scope>
    <scope>NOMENCLATURE</scope>
</reference>
<proteinExistence type="inferred from homology"/>
<comment type="subunit">
    <text evidence="1">Homodimer and heterodimers.</text>
</comment>
<comment type="subcellular location">
    <subcellularLocation>
        <location evidence="1">Cell membrane</location>
        <topology evidence="1">Multi-pass membrane protein</topology>
    </subcellularLocation>
</comment>
<comment type="similarity">
    <text evidence="4">Belongs to the Casparian strip membrane proteins (CASP) family.</text>
</comment>
<evidence type="ECO:0000250" key="1"/>
<evidence type="ECO:0000255" key="2"/>
<evidence type="ECO:0000256" key="3">
    <source>
        <dbReference type="SAM" id="MobiDB-lite"/>
    </source>
</evidence>
<evidence type="ECO:0000305" key="4"/>